<proteinExistence type="evidence at protein level"/>
<evidence type="ECO:0000255" key="1">
    <source>
        <dbReference type="PROSITE-ProRule" id="PRU00448"/>
    </source>
</evidence>
<dbReference type="EMBL" id="D63151">
    <property type="protein sequence ID" value="BAA09632.1"/>
    <property type="molecule type" value="mRNA"/>
</dbReference>
<dbReference type="PIR" id="S65149">
    <property type="entry name" value="S65149"/>
</dbReference>
<dbReference type="RefSeq" id="XP_013649791.1">
    <property type="nucleotide sequence ID" value="XM_013794337.3"/>
</dbReference>
<dbReference type="RefSeq" id="XP_013652416.1">
    <property type="nucleotide sequence ID" value="XM_013796962.1"/>
</dbReference>
<dbReference type="RefSeq" id="XP_013706000.1">
    <property type="nucleotide sequence ID" value="XM_013850546.1"/>
</dbReference>
<dbReference type="RefSeq" id="XP_013707438.1">
    <property type="nucleotide sequence ID" value="XM_013851984.3"/>
</dbReference>
<dbReference type="SMR" id="P69196"/>
<dbReference type="Allergome" id="710">
    <property type="allergen name" value="Bra n 4"/>
</dbReference>
<dbReference type="EnsemblPlants" id="CDX85450">
    <property type="protein sequence ID" value="CDX85450"/>
    <property type="gene ID" value="GSBRNA2T00143144001"/>
</dbReference>
<dbReference type="EnsemblPlants" id="CDY55935">
    <property type="protein sequence ID" value="CDY55935"/>
    <property type="gene ID" value="GSBRNA2T00017536001"/>
</dbReference>
<dbReference type="GeneID" id="106354412"/>
<dbReference type="GeneID" id="106411259"/>
<dbReference type="Gramene" id="CDX85450">
    <property type="protein sequence ID" value="CDX85450"/>
    <property type="gene ID" value="GSBRNA2T00143144001"/>
</dbReference>
<dbReference type="Gramene" id="CDY55935">
    <property type="protein sequence ID" value="CDY55935"/>
    <property type="gene ID" value="GSBRNA2T00017536001"/>
</dbReference>
<dbReference type="KEGG" id="bna:106354412"/>
<dbReference type="KEGG" id="bna:106411259"/>
<dbReference type="OMA" id="INFARAN"/>
<dbReference type="OrthoDB" id="26525at2759"/>
<dbReference type="GO" id="GO:0005509">
    <property type="term" value="F:calcium ion binding"/>
    <property type="evidence" value="ECO:0007669"/>
    <property type="project" value="InterPro"/>
</dbReference>
<dbReference type="CDD" id="cd00051">
    <property type="entry name" value="EFh"/>
    <property type="match status" value="1"/>
</dbReference>
<dbReference type="FunFam" id="1.10.238.10:FF:000003">
    <property type="entry name" value="Calmodulin A"/>
    <property type="match status" value="1"/>
</dbReference>
<dbReference type="Gene3D" id="1.10.238.10">
    <property type="entry name" value="EF-hand"/>
    <property type="match status" value="1"/>
</dbReference>
<dbReference type="InterPro" id="IPR011992">
    <property type="entry name" value="EF-hand-dom_pair"/>
</dbReference>
<dbReference type="InterPro" id="IPR018247">
    <property type="entry name" value="EF_Hand_1_Ca_BS"/>
</dbReference>
<dbReference type="InterPro" id="IPR002048">
    <property type="entry name" value="EF_hand_dom"/>
</dbReference>
<dbReference type="InterPro" id="IPR039647">
    <property type="entry name" value="EF_hand_pair_protein_CML-like"/>
</dbReference>
<dbReference type="PANTHER" id="PTHR10891">
    <property type="entry name" value="EF-HAND CALCIUM-BINDING DOMAIN CONTAINING PROTEIN"/>
    <property type="match status" value="1"/>
</dbReference>
<dbReference type="Pfam" id="PF13499">
    <property type="entry name" value="EF-hand_7"/>
    <property type="match status" value="1"/>
</dbReference>
<dbReference type="SMART" id="SM00054">
    <property type="entry name" value="EFh"/>
    <property type="match status" value="2"/>
</dbReference>
<dbReference type="SUPFAM" id="SSF47473">
    <property type="entry name" value="EF-hand"/>
    <property type="match status" value="1"/>
</dbReference>
<dbReference type="PROSITE" id="PS00018">
    <property type="entry name" value="EF_HAND_1"/>
    <property type="match status" value="2"/>
</dbReference>
<dbReference type="PROSITE" id="PS50222">
    <property type="entry name" value="EF_HAND_2"/>
    <property type="match status" value="2"/>
</dbReference>
<sequence length="79" mass="8644">MADAEHERIFKKFDTDGDGKISAAELEEALKKLGSVTPDDVTRMMAKIDTDGDGNISFQEFTEFASANPGLMKDVAKVF</sequence>
<feature type="chain" id="PRO_0000073667" description="Polcalcin Bra n 1">
    <location>
        <begin position="1"/>
        <end position="79"/>
    </location>
</feature>
<feature type="domain" description="EF-hand 1" evidence="1">
    <location>
        <begin position="1"/>
        <end position="36"/>
    </location>
</feature>
<feature type="domain" description="EF-hand 2" evidence="1">
    <location>
        <begin position="39"/>
        <end position="71"/>
    </location>
</feature>
<feature type="binding site" evidence="1">
    <location>
        <position position="14"/>
    </location>
    <ligand>
        <name>Ca(2+)</name>
        <dbReference type="ChEBI" id="CHEBI:29108"/>
        <label>1</label>
    </ligand>
</feature>
<feature type="binding site" evidence="1">
    <location>
        <position position="16"/>
    </location>
    <ligand>
        <name>Ca(2+)</name>
        <dbReference type="ChEBI" id="CHEBI:29108"/>
        <label>1</label>
    </ligand>
</feature>
<feature type="binding site" evidence="1">
    <location>
        <position position="18"/>
    </location>
    <ligand>
        <name>Ca(2+)</name>
        <dbReference type="ChEBI" id="CHEBI:29108"/>
        <label>1</label>
    </ligand>
</feature>
<feature type="binding site" evidence="1">
    <location>
        <position position="20"/>
    </location>
    <ligand>
        <name>Ca(2+)</name>
        <dbReference type="ChEBI" id="CHEBI:29108"/>
        <label>1</label>
    </ligand>
</feature>
<feature type="binding site" evidence="1">
    <location>
        <position position="25"/>
    </location>
    <ligand>
        <name>Ca(2+)</name>
        <dbReference type="ChEBI" id="CHEBI:29108"/>
        <label>1</label>
    </ligand>
</feature>
<feature type="binding site" evidence="1">
    <location>
        <position position="49"/>
    </location>
    <ligand>
        <name>Ca(2+)</name>
        <dbReference type="ChEBI" id="CHEBI:29108"/>
        <label>2</label>
    </ligand>
</feature>
<feature type="binding site" evidence="1">
    <location>
        <position position="51"/>
    </location>
    <ligand>
        <name>Ca(2+)</name>
        <dbReference type="ChEBI" id="CHEBI:29108"/>
        <label>2</label>
    </ligand>
</feature>
<feature type="binding site" evidence="1">
    <location>
        <position position="53"/>
    </location>
    <ligand>
        <name>Ca(2+)</name>
        <dbReference type="ChEBI" id="CHEBI:29108"/>
        <label>2</label>
    </ligand>
</feature>
<feature type="binding site" evidence="1">
    <location>
        <position position="55"/>
    </location>
    <ligand>
        <name>Ca(2+)</name>
        <dbReference type="ChEBI" id="CHEBI:29108"/>
        <label>2</label>
    </ligand>
</feature>
<feature type="binding site" evidence="1">
    <location>
        <position position="60"/>
    </location>
    <ligand>
        <name>Ca(2+)</name>
        <dbReference type="ChEBI" id="CHEBI:29108"/>
        <label>2</label>
    </ligand>
</feature>
<name>POLC1_BRANA</name>
<accession>P69196</accession>
<accession>Q42470</accession>
<protein>
    <recommendedName>
        <fullName>Polcalcin Bra n 1</fullName>
    </recommendedName>
    <alternativeName>
        <fullName>Calcium-binding pollen allergen Bra n 1</fullName>
    </alternativeName>
    <allergenName>Bra n 1</allergenName>
</protein>
<reference key="1">
    <citation type="journal article" date="1995" name="Plant Mol. Biol.">
        <title>A cDNA clone encoding an IgE-binding protein from Brassica anther has significant sequence similarity to Ca(2+)-binding proteins.</title>
        <authorList>
            <person name="Toriyama K."/>
            <person name="Okada T."/>
            <person name="Watanabe M."/>
            <person name="Ide T."/>
            <person name="Ashida T."/>
            <person name="Xu H."/>
            <person name="Singh M."/>
        </authorList>
    </citation>
    <scope>NUCLEOTIDE SEQUENCE [MRNA]</scope>
    <source>
        <strain>cv. Westar</strain>
        <tissue>Pollen</tissue>
    </source>
</reference>
<keyword id="KW-0020">Allergen</keyword>
<keyword id="KW-0106">Calcium</keyword>
<keyword id="KW-0479">Metal-binding</keyword>
<keyword id="KW-0677">Repeat</keyword>
<organism>
    <name type="scientific">Brassica napus</name>
    <name type="common">Rape</name>
    <dbReference type="NCBI Taxonomy" id="3708"/>
    <lineage>
        <taxon>Eukaryota</taxon>
        <taxon>Viridiplantae</taxon>
        <taxon>Streptophyta</taxon>
        <taxon>Embryophyta</taxon>
        <taxon>Tracheophyta</taxon>
        <taxon>Spermatophyta</taxon>
        <taxon>Magnoliopsida</taxon>
        <taxon>eudicotyledons</taxon>
        <taxon>Gunneridae</taxon>
        <taxon>Pentapetalae</taxon>
        <taxon>rosids</taxon>
        <taxon>malvids</taxon>
        <taxon>Brassicales</taxon>
        <taxon>Brassicaceae</taxon>
        <taxon>Brassiceae</taxon>
        <taxon>Brassica</taxon>
    </lineage>
</organism>
<comment type="allergen">
    <text>Causes an allergic reaction in human. Binds to IgE.</text>
</comment>